<organism>
    <name type="scientific">Mycobacterium tuberculosis (strain CDC 1551 / Oshkosh)</name>
    <dbReference type="NCBI Taxonomy" id="83331"/>
    <lineage>
        <taxon>Bacteria</taxon>
        <taxon>Bacillati</taxon>
        <taxon>Actinomycetota</taxon>
        <taxon>Actinomycetes</taxon>
        <taxon>Mycobacteriales</taxon>
        <taxon>Mycobacteriaceae</taxon>
        <taxon>Mycobacterium</taxon>
        <taxon>Mycobacterium tuberculosis complex</taxon>
    </lineage>
</organism>
<sequence length="402" mass="42113">MDAATTRVGLTDLTFRLLRESFADAVSWVAKNLPARPAVPVLSGVLLTGSDNGLTISGFDYEVSAEAQVGAEIVSPGSVLVSGRLLSDITRALPNKPVDVHVEGNRVALTCGNARFSLPTMPVEDYPTLPTLPEETGLLPAELFAEAISQVAIAAGRDDTLPMLTGIRVEILGETVVLAATDRFRLAVRELKWSASSPDIEAAVLVPAKTLAEAAKAGIGGSDVRLSLGTGPGVGKDGLLGISGNGKRSTTRLLDAEFPKFRQLLPTEHTAVATMDVAELIEAIKLVALVADRGAQVRMEFADGSVRLSAGADDVGRAEEDLVVDYAGEPLTIAFNPTYLTDGLSSLRSERVSFGFTTAGKPALLRPVSGDDRPVAGLNGNGPFPAVSTDYVYLLMPVRLPG</sequence>
<dbReference type="EMBL" id="AE000516">
    <property type="protein sequence ID" value="AAK44225.1"/>
    <property type="molecule type" value="Genomic_DNA"/>
</dbReference>
<dbReference type="PIR" id="F70850">
    <property type="entry name" value="F70850"/>
</dbReference>
<dbReference type="RefSeq" id="WP_003400271.1">
    <property type="nucleotide sequence ID" value="NZ_KK341227.1"/>
</dbReference>
<dbReference type="PDB" id="4TR7">
    <property type="method" value="X-ray"/>
    <property type="resolution" value="2.29 A"/>
    <property type="chains" value="A/B=1-402"/>
</dbReference>
<dbReference type="PDBsum" id="4TR7"/>
<dbReference type="SMR" id="P9WNU0"/>
<dbReference type="KEGG" id="mtc:MT0002"/>
<dbReference type="PATRIC" id="fig|83331.31.peg.2"/>
<dbReference type="HOGENOM" id="CLU_038149_1_1_11"/>
<dbReference type="EvolutionaryTrace" id="P9WNU0"/>
<dbReference type="Proteomes" id="UP000001020">
    <property type="component" value="Chromosome"/>
</dbReference>
<dbReference type="GO" id="GO:0005737">
    <property type="term" value="C:cytoplasm"/>
    <property type="evidence" value="ECO:0007669"/>
    <property type="project" value="UniProtKB-SubCell"/>
</dbReference>
<dbReference type="GO" id="GO:0009360">
    <property type="term" value="C:DNA polymerase III complex"/>
    <property type="evidence" value="ECO:0007669"/>
    <property type="project" value="InterPro"/>
</dbReference>
<dbReference type="GO" id="GO:0008408">
    <property type="term" value="F:3'-5' exonuclease activity"/>
    <property type="evidence" value="ECO:0007669"/>
    <property type="project" value="InterPro"/>
</dbReference>
<dbReference type="GO" id="GO:0003677">
    <property type="term" value="F:DNA binding"/>
    <property type="evidence" value="ECO:0007669"/>
    <property type="project" value="UniProtKB-KW"/>
</dbReference>
<dbReference type="GO" id="GO:0003887">
    <property type="term" value="F:DNA-directed DNA polymerase activity"/>
    <property type="evidence" value="ECO:0007669"/>
    <property type="project" value="UniProtKB-KW"/>
</dbReference>
<dbReference type="GO" id="GO:0006271">
    <property type="term" value="P:DNA strand elongation involved in DNA replication"/>
    <property type="evidence" value="ECO:0007669"/>
    <property type="project" value="TreeGrafter"/>
</dbReference>
<dbReference type="CDD" id="cd00140">
    <property type="entry name" value="beta_clamp"/>
    <property type="match status" value="1"/>
</dbReference>
<dbReference type="FunFam" id="3.10.150.10:FF:000001">
    <property type="entry name" value="Beta sliding clamp"/>
    <property type="match status" value="1"/>
</dbReference>
<dbReference type="FunFam" id="3.10.150.10:FF:000005">
    <property type="entry name" value="Beta sliding clamp"/>
    <property type="match status" value="1"/>
</dbReference>
<dbReference type="Gene3D" id="3.10.150.10">
    <property type="entry name" value="DNA Polymerase III, subunit A, domain 2"/>
    <property type="match status" value="3"/>
</dbReference>
<dbReference type="InterPro" id="IPR046938">
    <property type="entry name" value="DNA_clamp_sf"/>
</dbReference>
<dbReference type="InterPro" id="IPR001001">
    <property type="entry name" value="DNA_polIII_beta"/>
</dbReference>
<dbReference type="InterPro" id="IPR022635">
    <property type="entry name" value="DNA_polIII_beta_C"/>
</dbReference>
<dbReference type="InterPro" id="IPR022637">
    <property type="entry name" value="DNA_polIII_beta_cen"/>
</dbReference>
<dbReference type="InterPro" id="IPR022634">
    <property type="entry name" value="DNA_polIII_beta_N"/>
</dbReference>
<dbReference type="NCBIfam" id="TIGR00663">
    <property type="entry name" value="dnan"/>
    <property type="match status" value="1"/>
</dbReference>
<dbReference type="PANTHER" id="PTHR30478:SF0">
    <property type="entry name" value="BETA SLIDING CLAMP"/>
    <property type="match status" value="1"/>
</dbReference>
<dbReference type="PANTHER" id="PTHR30478">
    <property type="entry name" value="DNA POLYMERASE III SUBUNIT BETA"/>
    <property type="match status" value="1"/>
</dbReference>
<dbReference type="Pfam" id="PF00712">
    <property type="entry name" value="DNA_pol3_beta"/>
    <property type="match status" value="1"/>
</dbReference>
<dbReference type="Pfam" id="PF02767">
    <property type="entry name" value="DNA_pol3_beta_2"/>
    <property type="match status" value="1"/>
</dbReference>
<dbReference type="Pfam" id="PF02768">
    <property type="entry name" value="DNA_pol3_beta_3"/>
    <property type="match status" value="1"/>
</dbReference>
<dbReference type="PIRSF" id="PIRSF000804">
    <property type="entry name" value="DNA_pol_III_b"/>
    <property type="match status" value="1"/>
</dbReference>
<dbReference type="SMART" id="SM00480">
    <property type="entry name" value="POL3Bc"/>
    <property type="match status" value="1"/>
</dbReference>
<dbReference type="SUPFAM" id="SSF55979">
    <property type="entry name" value="DNA clamp"/>
    <property type="match status" value="3"/>
</dbReference>
<keyword id="KW-0002">3D-structure</keyword>
<keyword id="KW-0963">Cytoplasm</keyword>
<keyword id="KW-0235">DNA replication</keyword>
<keyword id="KW-0238">DNA-binding</keyword>
<keyword id="KW-0239">DNA-directed DNA polymerase</keyword>
<keyword id="KW-0548">Nucleotidyltransferase</keyword>
<keyword id="KW-1185">Reference proteome</keyword>
<keyword id="KW-0808">Transferase</keyword>
<gene>
    <name type="primary">dnaN</name>
    <name type="ordered locus">MT0002</name>
</gene>
<reference key="1">
    <citation type="journal article" date="2002" name="J. Bacteriol.">
        <title>Whole-genome comparison of Mycobacterium tuberculosis clinical and laboratory strains.</title>
        <authorList>
            <person name="Fleischmann R.D."/>
            <person name="Alland D."/>
            <person name="Eisen J.A."/>
            <person name="Carpenter L."/>
            <person name="White O."/>
            <person name="Peterson J.D."/>
            <person name="DeBoy R.T."/>
            <person name="Dodson R.J."/>
            <person name="Gwinn M.L."/>
            <person name="Haft D.H."/>
            <person name="Hickey E.K."/>
            <person name="Kolonay J.F."/>
            <person name="Nelson W.C."/>
            <person name="Umayam L.A."/>
            <person name="Ermolaeva M.D."/>
            <person name="Salzberg S.L."/>
            <person name="Delcher A."/>
            <person name="Utterback T.R."/>
            <person name="Weidman J.F."/>
            <person name="Khouri H.M."/>
            <person name="Gill J."/>
            <person name="Mikula A."/>
            <person name="Bishai W."/>
            <person name="Jacobs W.R. Jr."/>
            <person name="Venter J.C."/>
            <person name="Fraser C.M."/>
        </authorList>
    </citation>
    <scope>NUCLEOTIDE SEQUENCE [LARGE SCALE GENOMIC DNA]</scope>
    <source>
        <strain>CDC 1551 / Oshkosh</strain>
    </source>
</reference>
<reference evidence="4" key="2">
    <citation type="journal article" date="2014" name="J. Med. Chem.">
        <title>Differential modes of peptide binding onto replicative sliding clamps from various bacterial origins.</title>
        <authorList>
            <person name="Wolff P."/>
            <person name="Amal I."/>
            <person name="Olieric V."/>
            <person name="Chaloin O."/>
            <person name="Gygli G."/>
            <person name="Ennifar E."/>
            <person name="Lorber B."/>
            <person name="Guichard G."/>
            <person name="Wagner J."/>
            <person name="Dejaegere A."/>
            <person name="Burnouf D.Y."/>
        </authorList>
    </citation>
    <scope>X-RAY CRYSTALLOGRAPHY (2.29 ANGSTROMS)</scope>
    <scope>SUBUNIT</scope>
</reference>
<evidence type="ECO:0000250" key="1">
    <source>
        <dbReference type="UniProtKB" id="P0A988"/>
    </source>
</evidence>
<evidence type="ECO:0000269" key="2">
    <source>
    </source>
</evidence>
<evidence type="ECO:0000305" key="3"/>
<evidence type="ECO:0007744" key="4">
    <source>
        <dbReference type="PDB" id="4TR7"/>
    </source>
</evidence>
<evidence type="ECO:0007829" key="5">
    <source>
        <dbReference type="PDB" id="4TR7"/>
    </source>
</evidence>
<name>DPO3B_MYCTO</name>
<feature type="chain" id="PRO_0000427068" description="Beta sliding clamp">
    <location>
        <begin position="1"/>
        <end position="402"/>
    </location>
</feature>
<feature type="strand" evidence="5">
    <location>
        <begin position="14"/>
        <end position="18"/>
    </location>
</feature>
<feature type="helix" evidence="5">
    <location>
        <begin position="19"/>
        <end position="30"/>
    </location>
</feature>
<feature type="helix" evidence="5">
    <location>
        <begin position="41"/>
        <end position="43"/>
    </location>
</feature>
<feature type="strand" evidence="5">
    <location>
        <begin position="44"/>
        <end position="49"/>
    </location>
</feature>
<feature type="strand" evidence="5">
    <location>
        <begin position="51"/>
        <end position="58"/>
    </location>
</feature>
<feature type="strand" evidence="5">
    <location>
        <begin position="60"/>
        <end position="64"/>
    </location>
</feature>
<feature type="strand" evidence="5">
    <location>
        <begin position="66"/>
        <end position="70"/>
    </location>
</feature>
<feature type="strand" evidence="5">
    <location>
        <begin position="72"/>
        <end position="75"/>
    </location>
</feature>
<feature type="strand" evidence="5">
    <location>
        <begin position="77"/>
        <end position="82"/>
    </location>
</feature>
<feature type="helix" evidence="5">
    <location>
        <begin position="83"/>
        <end position="92"/>
    </location>
</feature>
<feature type="strand" evidence="5">
    <location>
        <begin position="95"/>
        <end position="103"/>
    </location>
</feature>
<feature type="strand" evidence="5">
    <location>
        <begin position="106"/>
        <end position="111"/>
    </location>
</feature>
<feature type="strand" evidence="5">
    <location>
        <begin position="114"/>
        <end position="119"/>
    </location>
</feature>
<feature type="helix" evidence="5">
    <location>
        <begin position="123"/>
        <end position="125"/>
    </location>
</feature>
<feature type="strand" evidence="5">
    <location>
        <begin position="135"/>
        <end position="139"/>
    </location>
</feature>
<feature type="helix" evidence="5">
    <location>
        <begin position="141"/>
        <end position="152"/>
    </location>
</feature>
<feature type="helix" evidence="5">
    <location>
        <begin position="162"/>
        <end position="164"/>
    </location>
</feature>
<feature type="strand" evidence="5">
    <location>
        <begin position="165"/>
        <end position="172"/>
    </location>
</feature>
<feature type="strand" evidence="5">
    <location>
        <begin position="175"/>
        <end position="181"/>
    </location>
</feature>
<feature type="strand" evidence="5">
    <location>
        <begin position="183"/>
        <end position="192"/>
    </location>
</feature>
<feature type="strand" evidence="5">
    <location>
        <begin position="201"/>
        <end position="207"/>
    </location>
</feature>
<feature type="helix" evidence="5">
    <location>
        <begin position="208"/>
        <end position="216"/>
    </location>
</feature>
<feature type="strand" evidence="5">
    <location>
        <begin position="224"/>
        <end position="227"/>
    </location>
</feature>
<feature type="strand" evidence="5">
    <location>
        <begin position="239"/>
        <end position="244"/>
    </location>
</feature>
<feature type="strand" evidence="5">
    <location>
        <begin position="247"/>
        <end position="252"/>
    </location>
</feature>
<feature type="helix" evidence="5">
    <location>
        <begin position="262"/>
        <end position="264"/>
    </location>
</feature>
<feature type="strand" evidence="5">
    <location>
        <begin position="267"/>
        <end position="276"/>
    </location>
</feature>
<feature type="helix" evidence="5">
    <location>
        <begin position="277"/>
        <end position="288"/>
    </location>
</feature>
<feature type="helix" evidence="5">
    <location>
        <begin position="292"/>
        <end position="294"/>
    </location>
</feature>
<feature type="strand" evidence="5">
    <location>
        <begin position="297"/>
        <end position="302"/>
    </location>
</feature>
<feature type="strand" evidence="5">
    <location>
        <begin position="305"/>
        <end position="312"/>
    </location>
</feature>
<feature type="turn" evidence="5">
    <location>
        <begin position="313"/>
        <end position="315"/>
    </location>
</feature>
<feature type="strand" evidence="5">
    <location>
        <begin position="316"/>
        <end position="323"/>
    </location>
</feature>
<feature type="strand" evidence="5">
    <location>
        <begin position="325"/>
        <end position="329"/>
    </location>
</feature>
<feature type="strand" evidence="5">
    <location>
        <begin position="331"/>
        <end position="335"/>
    </location>
</feature>
<feature type="helix" evidence="5">
    <location>
        <begin position="337"/>
        <end position="345"/>
    </location>
</feature>
<feature type="strand" evidence="5">
    <location>
        <begin position="349"/>
        <end position="356"/>
    </location>
</feature>
<feature type="strand" evidence="5">
    <location>
        <begin position="363"/>
        <end position="368"/>
    </location>
</feature>
<feature type="strand" evidence="5">
    <location>
        <begin position="390"/>
        <end position="395"/>
    </location>
</feature>
<comment type="function">
    <text evidence="1">Confers DNA tethering and processivity to DNA polymerases and other proteins. Acts as a clamp, forming a ring around DNA (a reaction catalyzed by the clamp-loading complex) which diffuses in an ATP-independent manner freely and bidirectionally along dsDNA. Initially characterized for its ability to contact the catalytic subunit of DNA polymerase III (Pol III), a complex, multichain enzyme responsible for most of the replicative synthesis in bacteria; Pol III exhibits 3'-5' exonuclease proofreading activity. The beta chain is required for initiation of replication as well as for processivity of DNA replication.</text>
</comment>
<comment type="subunit">
    <text evidence="1 2">Forms a ring-shaped head-to-tail homodimer (PubMed:25170813) around DNA which binds and tethers DNA polymerases and other proteins to the DNA (By similarity). The DNA replisome complex has a single clamp-loading complex (3 tau and 1 each of delta, delta', psi and chi subunits) which binds 3 Pol III cores (1 core on the leading strand and 2 on the lagging strand) each with a beta sliding clamp dimer. Additional proteins in the replisome are other copies of gamma, psi and chi, Ssb, DNA helicase and RNA primase.</text>
</comment>
<comment type="subcellular location">
    <subcellularLocation>
        <location evidence="1">Cytoplasm</location>
    </subcellularLocation>
</comment>
<comment type="similarity">
    <text evidence="3">Belongs to the beta sliding clamp family.</text>
</comment>
<accession>P9WNU0</accession>
<accession>L0T229</accession>
<accession>O53602</accession>
<accession>Q50790</accession>
<proteinExistence type="evidence at protein level"/>
<protein>
    <recommendedName>
        <fullName>Beta sliding clamp</fullName>
        <shortName>Beta clamp</shortName>
        <shortName>Sliding clamp</shortName>
    </recommendedName>
    <alternativeName>
        <fullName>Beta-clamp processivity factor</fullName>
    </alternativeName>
    <alternativeName>
        <fullName>DNA polymerase III beta sliding clamp subunit</fullName>
    </alternativeName>
    <alternativeName>
        <fullName>DNA polymerase III subunit beta</fullName>
    </alternativeName>
</protein>